<feature type="chain" id="PRO_0000085508" description="Putative uncharacterized protein W">
    <location>
        <begin position="1"/>
        <end position="86"/>
    </location>
</feature>
<accession>P19510</accession>
<dbReference type="EMBL" id="M34193">
    <property type="protein sequence ID" value="AAA46781.1"/>
    <property type="molecule type" value="Genomic_DNA"/>
</dbReference>
<dbReference type="EMBL" id="M31646">
    <property type="protein sequence ID" value="AAA66814.1"/>
    <property type="molecule type" value="Genomic_RNA"/>
</dbReference>
<dbReference type="RefSeq" id="NP_041251.1">
    <property type="nucleotide sequence ID" value="NC_001511.1"/>
</dbReference>
<dbReference type="GeneID" id="1489979"/>
<dbReference type="KEGG" id="vg:1489979"/>
<dbReference type="Proteomes" id="UP000243523">
    <property type="component" value="Segment"/>
</dbReference>
<name>VPW_OMVVS</name>
<organismHost>
    <name type="scientific">Ovis aries</name>
    <name type="common">Sheep</name>
    <dbReference type="NCBI Taxonomy" id="9940"/>
</organismHost>
<organism>
    <name type="scientific">Ovine maedi visna related virus (strain South Africa)</name>
    <name type="common">SA-OMVV</name>
    <name type="synonym">Ovine lentivirus</name>
    <dbReference type="NCBI Taxonomy" id="11664"/>
    <lineage>
        <taxon>Viruses</taxon>
        <taxon>Riboviria</taxon>
        <taxon>Pararnavirae</taxon>
        <taxon>Artverviricota</taxon>
        <taxon>Revtraviricetes</taxon>
        <taxon>Ortervirales</taxon>
        <taxon>Retroviridae</taxon>
        <taxon>Orthoretrovirinae</taxon>
        <taxon>Lentivirus</taxon>
        <taxon>Visna-maedi virus</taxon>
    </lineage>
</organism>
<proteinExistence type="predicted"/>
<reference key="1">
    <citation type="journal article" date="1990" name="Virology">
        <title>Nucleotide sequence analysis of SA-OMVV, a visna-related ovine lentivirus: phylogenetic history of lentiviruses.</title>
        <authorList>
            <person name="Querat G."/>
            <person name="Audoly G."/>
            <person name="Sonigo P."/>
            <person name="Vigne R."/>
        </authorList>
    </citation>
    <scope>NUCLEOTIDE SEQUENCE [GENOMIC DNA]</scope>
</reference>
<sequence length="86" mass="9748">MHTGRNSEAHRAKELATLSIIAYSKKPCISDNAALESKESNSAKVPMVRDRRVIRYLGLYRIAGTWNQYIINGGSTKKKARRQQRS</sequence>
<protein>
    <recommendedName>
        <fullName>Putative uncharacterized protein W</fullName>
    </recommendedName>
</protein>